<proteinExistence type="inferred from homology"/>
<accession>Q1R8X7</accession>
<organism>
    <name type="scientific">Escherichia coli (strain UTI89 / UPEC)</name>
    <dbReference type="NCBI Taxonomy" id="364106"/>
    <lineage>
        <taxon>Bacteria</taxon>
        <taxon>Pseudomonadati</taxon>
        <taxon>Pseudomonadota</taxon>
        <taxon>Gammaproteobacteria</taxon>
        <taxon>Enterobacterales</taxon>
        <taxon>Enterobacteriaceae</taxon>
        <taxon>Escherichia</taxon>
    </lineage>
</organism>
<comment type="subcellular location">
    <subcellularLocation>
        <location evidence="1">Cell membrane</location>
        <topology evidence="1">Multi-pass membrane protein</topology>
    </subcellularLocation>
</comment>
<comment type="similarity">
    <text evidence="1">Belongs to the chloride channel (TC 2.A.49) family.</text>
</comment>
<evidence type="ECO:0000255" key="1">
    <source>
        <dbReference type="HAMAP-Rule" id="MF_01115"/>
    </source>
</evidence>
<protein>
    <recommendedName>
        <fullName evidence="1">Putative ion-transport protein YfeO</fullName>
    </recommendedName>
</protein>
<dbReference type="EMBL" id="CP000243">
    <property type="protein sequence ID" value="ABE08187.1"/>
    <property type="molecule type" value="Genomic_DNA"/>
</dbReference>
<dbReference type="RefSeq" id="WP_000903099.1">
    <property type="nucleotide sequence ID" value="NZ_CP064825.1"/>
</dbReference>
<dbReference type="SMR" id="Q1R8X7"/>
<dbReference type="KEGG" id="eci:UTI89_C2721"/>
<dbReference type="HOGENOM" id="CLU_053130_0_0_6"/>
<dbReference type="Proteomes" id="UP000001952">
    <property type="component" value="Chromosome"/>
</dbReference>
<dbReference type="GO" id="GO:0005886">
    <property type="term" value="C:plasma membrane"/>
    <property type="evidence" value="ECO:0007669"/>
    <property type="project" value="UniProtKB-SubCell"/>
</dbReference>
<dbReference type="GO" id="GO:0015108">
    <property type="term" value="F:chloride transmembrane transporter activity"/>
    <property type="evidence" value="ECO:0007669"/>
    <property type="project" value="InterPro"/>
</dbReference>
<dbReference type="GO" id="GO:0005216">
    <property type="term" value="F:monoatomic ion channel activity"/>
    <property type="evidence" value="ECO:0007669"/>
    <property type="project" value="UniProtKB-UniRule"/>
</dbReference>
<dbReference type="CDD" id="cd00400">
    <property type="entry name" value="Voltage_gated_ClC"/>
    <property type="match status" value="1"/>
</dbReference>
<dbReference type="FunFam" id="1.10.3080.10:FF:000007">
    <property type="entry name" value="Putative ion-transport protein YfeO"/>
    <property type="match status" value="1"/>
</dbReference>
<dbReference type="Gene3D" id="1.10.3080.10">
    <property type="entry name" value="Clc chloride channel"/>
    <property type="match status" value="1"/>
</dbReference>
<dbReference type="HAMAP" id="MF_01115">
    <property type="entry name" value="CLC_YfeO"/>
    <property type="match status" value="1"/>
</dbReference>
<dbReference type="InterPro" id="IPR022969">
    <property type="entry name" value="Chloride_channel_YfeO"/>
</dbReference>
<dbReference type="InterPro" id="IPR014743">
    <property type="entry name" value="Cl-channel_core"/>
</dbReference>
<dbReference type="InterPro" id="IPR001807">
    <property type="entry name" value="ClC"/>
</dbReference>
<dbReference type="InterPro" id="IPR050368">
    <property type="entry name" value="ClC-type_chloride_channel"/>
</dbReference>
<dbReference type="NCBIfam" id="NF002971">
    <property type="entry name" value="PRK03655.1"/>
    <property type="match status" value="1"/>
</dbReference>
<dbReference type="PANTHER" id="PTHR43427">
    <property type="entry name" value="CHLORIDE CHANNEL PROTEIN CLC-E"/>
    <property type="match status" value="1"/>
</dbReference>
<dbReference type="PANTHER" id="PTHR43427:SF9">
    <property type="entry name" value="ION-TRANSPORT PROTEIN YFEO-RELATED"/>
    <property type="match status" value="1"/>
</dbReference>
<dbReference type="Pfam" id="PF00654">
    <property type="entry name" value="Voltage_CLC"/>
    <property type="match status" value="1"/>
</dbReference>
<dbReference type="PRINTS" id="PR00762">
    <property type="entry name" value="CLCHANNEL"/>
</dbReference>
<dbReference type="SUPFAM" id="SSF81340">
    <property type="entry name" value="Clc chloride channel"/>
    <property type="match status" value="1"/>
</dbReference>
<gene>
    <name evidence="1" type="primary">yfeO</name>
    <name type="ordered locus">UTI89_C2721</name>
</gene>
<reference key="1">
    <citation type="journal article" date="2006" name="Proc. Natl. Acad. Sci. U.S.A.">
        <title>Identification of genes subject to positive selection in uropathogenic strains of Escherichia coli: a comparative genomics approach.</title>
        <authorList>
            <person name="Chen S.L."/>
            <person name="Hung C.-S."/>
            <person name="Xu J."/>
            <person name="Reigstad C.S."/>
            <person name="Magrini V."/>
            <person name="Sabo A."/>
            <person name="Blasiar D."/>
            <person name="Bieri T."/>
            <person name="Meyer R.R."/>
            <person name="Ozersky P."/>
            <person name="Armstrong J.R."/>
            <person name="Fulton R.S."/>
            <person name="Latreille J.P."/>
            <person name="Spieth J."/>
            <person name="Hooton T.M."/>
            <person name="Mardis E.R."/>
            <person name="Hultgren S.J."/>
            <person name="Gordon J.I."/>
        </authorList>
    </citation>
    <scope>NUCLEOTIDE SEQUENCE [LARGE SCALE GENOMIC DNA]</scope>
    <source>
        <strain>UTI89 / UPEC</strain>
    </source>
</reference>
<keyword id="KW-1003">Cell membrane</keyword>
<keyword id="KW-0407">Ion channel</keyword>
<keyword id="KW-0406">Ion transport</keyword>
<keyword id="KW-0472">Membrane</keyword>
<keyword id="KW-0812">Transmembrane</keyword>
<keyword id="KW-1133">Transmembrane helix</keyword>
<keyword id="KW-0813">Transport</keyword>
<sequence>MLHPRARTMLLLSLPAVAIGIASSLILIMVMKIASVLQNLLWQRLPGTLGIAQDSPLWIIGVLTLTGIAVGLVIRFSQGHAGPDPACEPLIGAPVPPSALPGLIVALILGLAGGVSLGPEHPIMTVNIALAVAIGARLLPRVNRMEWTILASAGTIGALFGTPVAAALIFSQTLNGSNEVPLWDRLFAPLMAAAAGALTTGLFFHPHFSLPIAHYGQMEMTDILSGAIVAAIAIAAGMVAVWCLPRLHAMMHQMKNPVFVLGIGGLILGILGVIGGPVSLFKGLDEMQQMVANQAFSTSDYFLLAVIKLAALVVAAASGFRGGRIFPAVFVGVALGLMLHEHVPAVPAAITVSCAILGIVLVVTRDGWLSLFMAAVVVPNTTLLPLLCIVMLPAWLLLAGKPMMMVNRQKQQPPHDNV</sequence>
<name>YFEO_ECOUT</name>
<feature type="chain" id="PRO_0000298430" description="Putative ion-transport protein YfeO">
    <location>
        <begin position="1"/>
        <end position="418"/>
    </location>
</feature>
<feature type="transmembrane region" description="Helical" evidence="1">
    <location>
        <begin position="10"/>
        <end position="30"/>
    </location>
</feature>
<feature type="transmembrane region" description="Helical" evidence="1">
    <location>
        <begin position="54"/>
        <end position="74"/>
    </location>
</feature>
<feature type="transmembrane region" description="Helical" evidence="1">
    <location>
        <begin position="99"/>
        <end position="119"/>
    </location>
</feature>
<feature type="transmembrane region" description="Helical" evidence="1">
    <location>
        <begin position="120"/>
        <end position="140"/>
    </location>
</feature>
<feature type="transmembrane region" description="Helical" evidence="1">
    <location>
        <begin position="149"/>
        <end position="169"/>
    </location>
</feature>
<feature type="transmembrane region" description="Helical" evidence="1">
    <location>
        <begin position="186"/>
        <end position="206"/>
    </location>
</feature>
<feature type="transmembrane region" description="Helical" evidence="1">
    <location>
        <begin position="223"/>
        <end position="243"/>
    </location>
</feature>
<feature type="transmembrane region" description="Helical" evidence="1">
    <location>
        <begin position="258"/>
        <end position="278"/>
    </location>
</feature>
<feature type="transmembrane region" description="Helical" evidence="1">
    <location>
        <begin position="300"/>
        <end position="320"/>
    </location>
</feature>
<feature type="transmembrane region" description="Helical" evidence="1">
    <location>
        <begin position="322"/>
        <end position="342"/>
    </location>
</feature>
<feature type="transmembrane region" description="Helical" evidence="1">
    <location>
        <begin position="343"/>
        <end position="363"/>
    </location>
</feature>
<feature type="transmembrane region" description="Helical" evidence="1">
    <location>
        <begin position="371"/>
        <end position="391"/>
    </location>
</feature>